<gene>
    <name evidence="1" type="primary">acsA</name>
    <name type="ordered locus">Patl_0521</name>
</gene>
<accession>Q15YI8</accession>
<feature type="chain" id="PRO_1000137270" description="Acetyl-coenzyme A synthetase">
    <location>
        <begin position="1"/>
        <end position="646"/>
    </location>
</feature>
<feature type="binding site" evidence="1">
    <location>
        <begin position="190"/>
        <end position="193"/>
    </location>
    <ligand>
        <name>CoA</name>
        <dbReference type="ChEBI" id="CHEBI:57287"/>
    </ligand>
</feature>
<feature type="binding site" evidence="1">
    <location>
        <position position="309"/>
    </location>
    <ligand>
        <name>CoA</name>
        <dbReference type="ChEBI" id="CHEBI:57287"/>
    </ligand>
</feature>
<feature type="binding site" evidence="1">
    <location>
        <begin position="385"/>
        <end position="387"/>
    </location>
    <ligand>
        <name>ATP</name>
        <dbReference type="ChEBI" id="CHEBI:30616"/>
    </ligand>
</feature>
<feature type="binding site" evidence="1">
    <location>
        <begin position="409"/>
        <end position="414"/>
    </location>
    <ligand>
        <name>ATP</name>
        <dbReference type="ChEBI" id="CHEBI:30616"/>
    </ligand>
</feature>
<feature type="binding site" evidence="1">
    <location>
        <position position="498"/>
    </location>
    <ligand>
        <name>ATP</name>
        <dbReference type="ChEBI" id="CHEBI:30616"/>
    </ligand>
</feature>
<feature type="binding site" evidence="1">
    <location>
        <position position="513"/>
    </location>
    <ligand>
        <name>ATP</name>
        <dbReference type="ChEBI" id="CHEBI:30616"/>
    </ligand>
</feature>
<feature type="binding site" evidence="1">
    <location>
        <position position="521"/>
    </location>
    <ligand>
        <name>CoA</name>
        <dbReference type="ChEBI" id="CHEBI:57287"/>
    </ligand>
</feature>
<feature type="binding site" evidence="1">
    <location>
        <position position="524"/>
    </location>
    <ligand>
        <name>ATP</name>
        <dbReference type="ChEBI" id="CHEBI:30616"/>
    </ligand>
</feature>
<feature type="binding site" evidence="1">
    <location>
        <position position="535"/>
    </location>
    <ligand>
        <name>Mg(2+)</name>
        <dbReference type="ChEBI" id="CHEBI:18420"/>
    </ligand>
</feature>
<feature type="binding site" evidence="1">
    <location>
        <position position="537"/>
    </location>
    <ligand>
        <name>Mg(2+)</name>
        <dbReference type="ChEBI" id="CHEBI:18420"/>
    </ligand>
</feature>
<feature type="binding site" evidence="1">
    <location>
        <position position="540"/>
    </location>
    <ligand>
        <name>Mg(2+)</name>
        <dbReference type="ChEBI" id="CHEBI:18420"/>
    </ligand>
</feature>
<feature type="binding site" evidence="1">
    <location>
        <position position="582"/>
    </location>
    <ligand>
        <name>CoA</name>
        <dbReference type="ChEBI" id="CHEBI:57287"/>
    </ligand>
</feature>
<feature type="modified residue" description="N6-acetyllysine" evidence="1">
    <location>
        <position position="607"/>
    </location>
</feature>
<reference key="1">
    <citation type="submission" date="2006-06" db="EMBL/GenBank/DDBJ databases">
        <title>Complete sequence of Pseudoalteromonas atlantica T6c.</title>
        <authorList>
            <consortium name="US DOE Joint Genome Institute"/>
            <person name="Copeland A."/>
            <person name="Lucas S."/>
            <person name="Lapidus A."/>
            <person name="Barry K."/>
            <person name="Detter J.C."/>
            <person name="Glavina del Rio T."/>
            <person name="Hammon N."/>
            <person name="Israni S."/>
            <person name="Dalin E."/>
            <person name="Tice H."/>
            <person name="Pitluck S."/>
            <person name="Saunders E."/>
            <person name="Brettin T."/>
            <person name="Bruce D."/>
            <person name="Han C."/>
            <person name="Tapia R."/>
            <person name="Gilna P."/>
            <person name="Schmutz J."/>
            <person name="Larimer F."/>
            <person name="Land M."/>
            <person name="Hauser L."/>
            <person name="Kyrpides N."/>
            <person name="Kim E."/>
            <person name="Karls A.C."/>
            <person name="Bartlett D."/>
            <person name="Higgins B.P."/>
            <person name="Richardson P."/>
        </authorList>
    </citation>
    <scope>NUCLEOTIDE SEQUENCE [LARGE SCALE GENOMIC DNA]</scope>
    <source>
        <strain>T6c / ATCC BAA-1087</strain>
    </source>
</reference>
<name>ACSA_PSEA6</name>
<dbReference type="EC" id="6.2.1.1" evidence="1"/>
<dbReference type="EMBL" id="CP000388">
    <property type="protein sequence ID" value="ABG39050.1"/>
    <property type="molecule type" value="Genomic_DNA"/>
</dbReference>
<dbReference type="RefSeq" id="WP_011573434.1">
    <property type="nucleotide sequence ID" value="NC_008228.1"/>
</dbReference>
<dbReference type="SMR" id="Q15YI8"/>
<dbReference type="STRING" id="342610.Patl_0521"/>
<dbReference type="KEGG" id="pat:Patl_0521"/>
<dbReference type="eggNOG" id="COG0365">
    <property type="taxonomic scope" value="Bacteria"/>
</dbReference>
<dbReference type="HOGENOM" id="CLU_000022_3_6_6"/>
<dbReference type="OrthoDB" id="9803968at2"/>
<dbReference type="Proteomes" id="UP000001981">
    <property type="component" value="Chromosome"/>
</dbReference>
<dbReference type="GO" id="GO:0005829">
    <property type="term" value="C:cytosol"/>
    <property type="evidence" value="ECO:0007669"/>
    <property type="project" value="TreeGrafter"/>
</dbReference>
<dbReference type="GO" id="GO:0003987">
    <property type="term" value="F:acetate-CoA ligase activity"/>
    <property type="evidence" value="ECO:0007669"/>
    <property type="project" value="UniProtKB-UniRule"/>
</dbReference>
<dbReference type="GO" id="GO:0016208">
    <property type="term" value="F:AMP binding"/>
    <property type="evidence" value="ECO:0007669"/>
    <property type="project" value="InterPro"/>
</dbReference>
<dbReference type="GO" id="GO:0005524">
    <property type="term" value="F:ATP binding"/>
    <property type="evidence" value="ECO:0007669"/>
    <property type="project" value="UniProtKB-KW"/>
</dbReference>
<dbReference type="GO" id="GO:0046872">
    <property type="term" value="F:metal ion binding"/>
    <property type="evidence" value="ECO:0007669"/>
    <property type="project" value="UniProtKB-KW"/>
</dbReference>
<dbReference type="GO" id="GO:0019427">
    <property type="term" value="P:acetyl-CoA biosynthetic process from acetate"/>
    <property type="evidence" value="ECO:0007669"/>
    <property type="project" value="InterPro"/>
</dbReference>
<dbReference type="CDD" id="cd05966">
    <property type="entry name" value="ACS"/>
    <property type="match status" value="1"/>
</dbReference>
<dbReference type="FunFam" id="3.30.300.30:FF:000004">
    <property type="entry name" value="Acetyl-coenzyme A synthetase"/>
    <property type="match status" value="1"/>
</dbReference>
<dbReference type="FunFam" id="3.40.50.12780:FF:000001">
    <property type="entry name" value="Acetyl-coenzyme A synthetase"/>
    <property type="match status" value="1"/>
</dbReference>
<dbReference type="Gene3D" id="3.30.300.30">
    <property type="match status" value="1"/>
</dbReference>
<dbReference type="Gene3D" id="3.40.50.12780">
    <property type="entry name" value="N-terminal domain of ligase-like"/>
    <property type="match status" value="1"/>
</dbReference>
<dbReference type="HAMAP" id="MF_01123">
    <property type="entry name" value="Ac_CoA_synth"/>
    <property type="match status" value="1"/>
</dbReference>
<dbReference type="InterPro" id="IPR011904">
    <property type="entry name" value="Ac_CoA_lig"/>
</dbReference>
<dbReference type="InterPro" id="IPR032387">
    <property type="entry name" value="ACAS_N"/>
</dbReference>
<dbReference type="InterPro" id="IPR025110">
    <property type="entry name" value="AMP-bd_C"/>
</dbReference>
<dbReference type="InterPro" id="IPR045851">
    <property type="entry name" value="AMP-bd_C_sf"/>
</dbReference>
<dbReference type="InterPro" id="IPR020845">
    <property type="entry name" value="AMP-binding_CS"/>
</dbReference>
<dbReference type="InterPro" id="IPR000873">
    <property type="entry name" value="AMP-dep_synth/lig_dom"/>
</dbReference>
<dbReference type="InterPro" id="IPR042099">
    <property type="entry name" value="ANL_N_sf"/>
</dbReference>
<dbReference type="NCBIfam" id="TIGR02188">
    <property type="entry name" value="Ac_CoA_lig_AcsA"/>
    <property type="match status" value="1"/>
</dbReference>
<dbReference type="NCBIfam" id="NF001208">
    <property type="entry name" value="PRK00174.1"/>
    <property type="match status" value="1"/>
</dbReference>
<dbReference type="PANTHER" id="PTHR24095">
    <property type="entry name" value="ACETYL-COENZYME A SYNTHETASE"/>
    <property type="match status" value="1"/>
</dbReference>
<dbReference type="PANTHER" id="PTHR24095:SF243">
    <property type="entry name" value="ACETYL-COENZYME A SYNTHETASE"/>
    <property type="match status" value="1"/>
</dbReference>
<dbReference type="Pfam" id="PF16177">
    <property type="entry name" value="ACAS_N"/>
    <property type="match status" value="1"/>
</dbReference>
<dbReference type="Pfam" id="PF00501">
    <property type="entry name" value="AMP-binding"/>
    <property type="match status" value="1"/>
</dbReference>
<dbReference type="Pfam" id="PF13193">
    <property type="entry name" value="AMP-binding_C"/>
    <property type="match status" value="1"/>
</dbReference>
<dbReference type="SUPFAM" id="SSF56801">
    <property type="entry name" value="Acetyl-CoA synthetase-like"/>
    <property type="match status" value="1"/>
</dbReference>
<dbReference type="PROSITE" id="PS00455">
    <property type="entry name" value="AMP_BINDING"/>
    <property type="match status" value="1"/>
</dbReference>
<comment type="function">
    <text evidence="1">Catalyzes the conversion of acetate into acetyl-CoA (AcCoA), an essential intermediate at the junction of anabolic and catabolic pathways. AcsA undergoes a two-step reaction. In the first half reaction, AcsA combines acetate with ATP to form acetyl-adenylate (AcAMP) intermediate. In the second half reaction, it can then transfer the acetyl group from AcAMP to the sulfhydryl group of CoA, forming the product AcCoA.</text>
</comment>
<comment type="catalytic activity">
    <reaction evidence="1">
        <text>acetate + ATP + CoA = acetyl-CoA + AMP + diphosphate</text>
        <dbReference type="Rhea" id="RHEA:23176"/>
        <dbReference type="ChEBI" id="CHEBI:30089"/>
        <dbReference type="ChEBI" id="CHEBI:30616"/>
        <dbReference type="ChEBI" id="CHEBI:33019"/>
        <dbReference type="ChEBI" id="CHEBI:57287"/>
        <dbReference type="ChEBI" id="CHEBI:57288"/>
        <dbReference type="ChEBI" id="CHEBI:456215"/>
        <dbReference type="EC" id="6.2.1.1"/>
    </reaction>
</comment>
<comment type="cofactor">
    <cofactor evidence="1">
        <name>Mg(2+)</name>
        <dbReference type="ChEBI" id="CHEBI:18420"/>
    </cofactor>
</comment>
<comment type="PTM">
    <text evidence="1">Acetylated. Deacetylation by the SIR2-homolog deacetylase activates the enzyme.</text>
</comment>
<comment type="similarity">
    <text evidence="1">Belongs to the ATP-dependent AMP-binding enzyme family.</text>
</comment>
<organism>
    <name type="scientific">Pseudoalteromonas atlantica (strain T6c / ATCC BAA-1087)</name>
    <dbReference type="NCBI Taxonomy" id="3042615"/>
    <lineage>
        <taxon>Bacteria</taxon>
        <taxon>Pseudomonadati</taxon>
        <taxon>Pseudomonadota</taxon>
        <taxon>Gammaproteobacteria</taxon>
        <taxon>Alteromonadales</taxon>
        <taxon>Alteromonadaceae</taxon>
        <taxon>Paraglaciecola</taxon>
    </lineage>
</organism>
<keyword id="KW-0007">Acetylation</keyword>
<keyword id="KW-0067">ATP-binding</keyword>
<keyword id="KW-0436">Ligase</keyword>
<keyword id="KW-0460">Magnesium</keyword>
<keyword id="KW-0479">Metal-binding</keyword>
<keyword id="KW-0547">Nucleotide-binding</keyword>
<evidence type="ECO:0000255" key="1">
    <source>
        <dbReference type="HAMAP-Rule" id="MF_01123"/>
    </source>
</evidence>
<sequence length="646" mass="71398">MSQQIYPVPAHAKEHSHLTPADYARMYAESVEQPEVFWAEQAKSLDWVKTPTKIKNTSFDAHHVSIKWFEDGELNVAYNCIDRHLAKRGHVTAFIWEGDDPHSHDIITYHRLHDEVAKIANGLRKLGVGKGDRVAIYMPMIPQAVYAMLACARIGAVHTVIFGGFSPNAIADRVNNCQAKVLITADEGLRAGKHIPLKDNVDTALAEHDCPSMEQVIVFKHTGSHVSWGKDDVWWHDLTDGCSTDCPPEVMNAEDPLFILYTSGSTGQPKGVVHTTGGYLLWASITHKYVFDYKPGDIYWCAADVGWVTGHSYIVYGPLANGATSVMFEGVPTYPDVRRIGQIVDKHKVNILYTAPTAIRALMAHGDFPTEGISGESLRLLGSVGEPINPEAWHWYYTTVGQSRCPIVDTWWQTETGAAMLTPLPSVTAMKPGAASHPFFGVQPALVDGQGNELSGATEGNLIITDSWPGQARTVYGDHERFVQTYFTTYPGTYCTGDGARRDEDDYFWITGRVDDVLNVSGHRLGTAEIESALVSHNAVAEAAVVGYPHDLKGQGIYVYLMPNEGVEITDELTKEVSNWVRKELSPIATPDLIQWSSGLPKTRSGKIMRRILRKIAANEYEQLGDTSTLADPSVVDTLIEQRLNR</sequence>
<proteinExistence type="inferred from homology"/>
<protein>
    <recommendedName>
        <fullName evidence="1">Acetyl-coenzyme A synthetase</fullName>
        <shortName evidence="1">AcCoA synthetase</shortName>
        <shortName evidence="1">Acs</shortName>
        <ecNumber evidence="1">6.2.1.1</ecNumber>
    </recommendedName>
    <alternativeName>
        <fullName evidence="1">Acetate--CoA ligase</fullName>
    </alternativeName>
    <alternativeName>
        <fullName evidence="1">Acyl-activating enzyme</fullName>
    </alternativeName>
</protein>